<proteinExistence type="inferred from homology"/>
<name>RIMP_SINMW</name>
<keyword id="KW-0963">Cytoplasm</keyword>
<keyword id="KW-0690">Ribosome biogenesis</keyword>
<dbReference type="EMBL" id="CP000738">
    <property type="protein sequence ID" value="ABR62256.1"/>
    <property type="molecule type" value="Genomic_DNA"/>
</dbReference>
<dbReference type="RefSeq" id="WP_012067636.1">
    <property type="nucleotide sequence ID" value="NC_009636.1"/>
</dbReference>
<dbReference type="RefSeq" id="YP_001329091.1">
    <property type="nucleotide sequence ID" value="NC_009636.1"/>
</dbReference>
<dbReference type="SMR" id="A6UF26"/>
<dbReference type="STRING" id="366394.Smed_3438"/>
<dbReference type="GeneID" id="61610989"/>
<dbReference type="KEGG" id="smd:Smed_3438"/>
<dbReference type="PATRIC" id="fig|366394.8.peg.6688"/>
<dbReference type="eggNOG" id="COG0779">
    <property type="taxonomic scope" value="Bacteria"/>
</dbReference>
<dbReference type="HOGENOM" id="CLU_070525_0_1_5"/>
<dbReference type="OrthoDB" id="9805006at2"/>
<dbReference type="Proteomes" id="UP000001108">
    <property type="component" value="Chromosome"/>
</dbReference>
<dbReference type="GO" id="GO:0005829">
    <property type="term" value="C:cytosol"/>
    <property type="evidence" value="ECO:0007669"/>
    <property type="project" value="TreeGrafter"/>
</dbReference>
<dbReference type="GO" id="GO:0000028">
    <property type="term" value="P:ribosomal small subunit assembly"/>
    <property type="evidence" value="ECO:0007669"/>
    <property type="project" value="TreeGrafter"/>
</dbReference>
<dbReference type="GO" id="GO:0006412">
    <property type="term" value="P:translation"/>
    <property type="evidence" value="ECO:0007669"/>
    <property type="project" value="TreeGrafter"/>
</dbReference>
<dbReference type="CDD" id="cd01734">
    <property type="entry name" value="YlxS_C"/>
    <property type="match status" value="1"/>
</dbReference>
<dbReference type="Gene3D" id="2.30.30.180">
    <property type="entry name" value="Ribosome maturation factor RimP, C-terminal domain"/>
    <property type="match status" value="1"/>
</dbReference>
<dbReference type="Gene3D" id="3.30.300.70">
    <property type="entry name" value="RimP-like superfamily, N-terminal"/>
    <property type="match status" value="1"/>
</dbReference>
<dbReference type="HAMAP" id="MF_01077">
    <property type="entry name" value="RimP"/>
    <property type="match status" value="1"/>
</dbReference>
<dbReference type="InterPro" id="IPR003728">
    <property type="entry name" value="Ribosome_maturation_RimP"/>
</dbReference>
<dbReference type="InterPro" id="IPR028998">
    <property type="entry name" value="RimP_C"/>
</dbReference>
<dbReference type="InterPro" id="IPR036847">
    <property type="entry name" value="RimP_C_sf"/>
</dbReference>
<dbReference type="InterPro" id="IPR028989">
    <property type="entry name" value="RimP_N"/>
</dbReference>
<dbReference type="InterPro" id="IPR035956">
    <property type="entry name" value="RimP_N_sf"/>
</dbReference>
<dbReference type="NCBIfam" id="NF000932">
    <property type="entry name" value="PRK00092.2-5"/>
    <property type="match status" value="1"/>
</dbReference>
<dbReference type="PANTHER" id="PTHR33867">
    <property type="entry name" value="RIBOSOME MATURATION FACTOR RIMP"/>
    <property type="match status" value="1"/>
</dbReference>
<dbReference type="PANTHER" id="PTHR33867:SF1">
    <property type="entry name" value="RIBOSOME MATURATION FACTOR RIMP"/>
    <property type="match status" value="1"/>
</dbReference>
<dbReference type="Pfam" id="PF17384">
    <property type="entry name" value="DUF150_C"/>
    <property type="match status" value="1"/>
</dbReference>
<dbReference type="Pfam" id="PF02576">
    <property type="entry name" value="RimP_N"/>
    <property type="match status" value="1"/>
</dbReference>
<dbReference type="SUPFAM" id="SSF74942">
    <property type="entry name" value="YhbC-like, C-terminal domain"/>
    <property type="match status" value="1"/>
</dbReference>
<dbReference type="SUPFAM" id="SSF75420">
    <property type="entry name" value="YhbC-like, N-terminal domain"/>
    <property type="match status" value="1"/>
</dbReference>
<feature type="chain" id="PRO_1000064776" description="Ribosome maturation factor RimP">
    <location>
        <begin position="1"/>
        <end position="205"/>
    </location>
</feature>
<comment type="function">
    <text evidence="1">Required for maturation of 30S ribosomal subunits.</text>
</comment>
<comment type="subcellular location">
    <subcellularLocation>
        <location evidence="1">Cytoplasm</location>
    </subcellularLocation>
</comment>
<comment type="similarity">
    <text evidence="1">Belongs to the RimP family.</text>
</comment>
<reference key="1">
    <citation type="submission" date="2007-06" db="EMBL/GenBank/DDBJ databases">
        <title>Complete sequence of Sinorhizobium medicae WSM419 chromosome.</title>
        <authorList>
            <consortium name="US DOE Joint Genome Institute"/>
            <person name="Copeland A."/>
            <person name="Lucas S."/>
            <person name="Lapidus A."/>
            <person name="Barry K."/>
            <person name="Glavina del Rio T."/>
            <person name="Dalin E."/>
            <person name="Tice H."/>
            <person name="Pitluck S."/>
            <person name="Chain P."/>
            <person name="Malfatti S."/>
            <person name="Shin M."/>
            <person name="Vergez L."/>
            <person name="Schmutz J."/>
            <person name="Larimer F."/>
            <person name="Land M."/>
            <person name="Hauser L."/>
            <person name="Kyrpides N."/>
            <person name="Mikhailova N."/>
            <person name="Reeve W.G."/>
            <person name="Richardson P."/>
        </authorList>
    </citation>
    <scope>NUCLEOTIDE SEQUENCE [LARGE SCALE GENOMIC DNA]</scope>
    <source>
        <strain>WSM419</strain>
    </source>
</reference>
<protein>
    <recommendedName>
        <fullName evidence="1">Ribosome maturation factor RimP</fullName>
    </recommendedName>
</protein>
<accession>A6UF26</accession>
<organism>
    <name type="scientific">Sinorhizobium medicae (strain WSM419)</name>
    <name type="common">Ensifer medicae</name>
    <dbReference type="NCBI Taxonomy" id="366394"/>
    <lineage>
        <taxon>Bacteria</taxon>
        <taxon>Pseudomonadati</taxon>
        <taxon>Pseudomonadota</taxon>
        <taxon>Alphaproteobacteria</taxon>
        <taxon>Hyphomicrobiales</taxon>
        <taxon>Rhizobiaceae</taxon>
        <taxon>Sinorhizobium/Ensifer group</taxon>
        <taxon>Sinorhizobium</taxon>
    </lineage>
</organism>
<sequence length="205" mass="23018">MSDTTTAENANEPRLITETGLDRRVADIIEPVLVDLGFRLVRVRMSGQNGLTLQVMTERNDGTMTVEDCEEVSKAISPVLDVEDPIDKAYHLEVSSPGIDRPMVRRSDFIRWQGHLLKCETSVLVEGRKRFRGKIVSVDEDGFRLERDQPAYGEEAGVTIPFTALSEARLILTDELIRDALTADKKAKAARAANENFEEEDRDIE</sequence>
<evidence type="ECO:0000255" key="1">
    <source>
        <dbReference type="HAMAP-Rule" id="MF_01077"/>
    </source>
</evidence>
<gene>
    <name evidence="1" type="primary">rimP</name>
    <name type="ordered locus">Smed_3438</name>
</gene>